<proteinExistence type="inferred from homology"/>
<name>LPXD_POLNS</name>
<dbReference type="EC" id="2.3.1.191" evidence="1"/>
<dbReference type="EMBL" id="CP001010">
    <property type="protein sequence ID" value="ACB43780.1"/>
    <property type="molecule type" value="Genomic_DNA"/>
</dbReference>
<dbReference type="SMR" id="B1XTV3"/>
<dbReference type="STRING" id="452638.Pnec_0517"/>
<dbReference type="KEGG" id="pne:Pnec_0517"/>
<dbReference type="eggNOG" id="COG1044">
    <property type="taxonomic scope" value="Bacteria"/>
</dbReference>
<dbReference type="HOGENOM" id="CLU_049865_0_1_4"/>
<dbReference type="OrthoDB" id="9784739at2"/>
<dbReference type="UniPathway" id="UPA00973"/>
<dbReference type="GO" id="GO:0016020">
    <property type="term" value="C:membrane"/>
    <property type="evidence" value="ECO:0007669"/>
    <property type="project" value="GOC"/>
</dbReference>
<dbReference type="GO" id="GO:0016410">
    <property type="term" value="F:N-acyltransferase activity"/>
    <property type="evidence" value="ECO:0007669"/>
    <property type="project" value="InterPro"/>
</dbReference>
<dbReference type="GO" id="GO:0009245">
    <property type="term" value="P:lipid A biosynthetic process"/>
    <property type="evidence" value="ECO:0007669"/>
    <property type="project" value="UniProtKB-UniRule"/>
</dbReference>
<dbReference type="CDD" id="cd03352">
    <property type="entry name" value="LbH_LpxD"/>
    <property type="match status" value="1"/>
</dbReference>
<dbReference type="Gene3D" id="2.160.10.10">
    <property type="entry name" value="Hexapeptide repeat proteins"/>
    <property type="match status" value="1"/>
</dbReference>
<dbReference type="Gene3D" id="3.40.1390.10">
    <property type="entry name" value="MurE/MurF, N-terminal domain"/>
    <property type="match status" value="1"/>
</dbReference>
<dbReference type="HAMAP" id="MF_00523">
    <property type="entry name" value="LpxD"/>
    <property type="match status" value="1"/>
</dbReference>
<dbReference type="InterPro" id="IPR001451">
    <property type="entry name" value="Hexapep"/>
</dbReference>
<dbReference type="InterPro" id="IPR018357">
    <property type="entry name" value="Hexapep_transf_CS"/>
</dbReference>
<dbReference type="InterPro" id="IPR007691">
    <property type="entry name" value="LpxD"/>
</dbReference>
<dbReference type="InterPro" id="IPR011004">
    <property type="entry name" value="Trimer_LpxA-like_sf"/>
</dbReference>
<dbReference type="InterPro" id="IPR020573">
    <property type="entry name" value="UDP_GlcNAc_AcTrfase_non-rep"/>
</dbReference>
<dbReference type="NCBIfam" id="TIGR01853">
    <property type="entry name" value="lipid_A_lpxD"/>
    <property type="match status" value="1"/>
</dbReference>
<dbReference type="NCBIfam" id="NF002060">
    <property type="entry name" value="PRK00892.1"/>
    <property type="match status" value="1"/>
</dbReference>
<dbReference type="PANTHER" id="PTHR43378">
    <property type="entry name" value="UDP-3-O-ACYLGLUCOSAMINE N-ACYLTRANSFERASE"/>
    <property type="match status" value="1"/>
</dbReference>
<dbReference type="PANTHER" id="PTHR43378:SF2">
    <property type="entry name" value="UDP-3-O-ACYLGLUCOSAMINE N-ACYLTRANSFERASE 1, MITOCHONDRIAL-RELATED"/>
    <property type="match status" value="1"/>
</dbReference>
<dbReference type="Pfam" id="PF00132">
    <property type="entry name" value="Hexapep"/>
    <property type="match status" value="2"/>
</dbReference>
<dbReference type="Pfam" id="PF04613">
    <property type="entry name" value="LpxD"/>
    <property type="match status" value="1"/>
</dbReference>
<dbReference type="SUPFAM" id="SSF51161">
    <property type="entry name" value="Trimeric LpxA-like enzymes"/>
    <property type="match status" value="1"/>
</dbReference>
<dbReference type="PROSITE" id="PS00101">
    <property type="entry name" value="HEXAPEP_TRANSFERASES"/>
    <property type="match status" value="1"/>
</dbReference>
<accession>B1XTV3</accession>
<comment type="function">
    <text evidence="1">Catalyzes the N-acylation of UDP-3-O-acylglucosamine using 3-hydroxyacyl-ACP as the acyl donor. Is involved in the biosynthesis of lipid A, a phosphorylated glycolipid that anchors the lipopolysaccharide to the outer membrane of the cell.</text>
</comment>
<comment type="catalytic activity">
    <reaction evidence="1">
        <text>a UDP-3-O-[(3R)-3-hydroxyacyl]-alpha-D-glucosamine + a (3R)-hydroxyacyl-[ACP] = a UDP-2-N,3-O-bis[(3R)-3-hydroxyacyl]-alpha-D-glucosamine + holo-[ACP] + H(+)</text>
        <dbReference type="Rhea" id="RHEA:53836"/>
        <dbReference type="Rhea" id="RHEA-COMP:9685"/>
        <dbReference type="Rhea" id="RHEA-COMP:9945"/>
        <dbReference type="ChEBI" id="CHEBI:15378"/>
        <dbReference type="ChEBI" id="CHEBI:64479"/>
        <dbReference type="ChEBI" id="CHEBI:78827"/>
        <dbReference type="ChEBI" id="CHEBI:137740"/>
        <dbReference type="ChEBI" id="CHEBI:137748"/>
        <dbReference type="EC" id="2.3.1.191"/>
    </reaction>
</comment>
<comment type="pathway">
    <text evidence="1">Bacterial outer membrane biogenesis; LPS lipid A biosynthesis.</text>
</comment>
<comment type="subunit">
    <text evidence="1">Homotrimer.</text>
</comment>
<comment type="similarity">
    <text evidence="1">Belongs to the transferase hexapeptide repeat family. LpxD subfamily.</text>
</comment>
<evidence type="ECO:0000255" key="1">
    <source>
        <dbReference type="HAMAP-Rule" id="MF_00523"/>
    </source>
</evidence>
<feature type="chain" id="PRO_1000211750" description="UDP-3-O-acylglucosamine N-acyltransferase">
    <location>
        <begin position="1"/>
        <end position="355"/>
    </location>
</feature>
<feature type="active site" description="Proton acceptor" evidence="1">
    <location>
        <position position="252"/>
    </location>
</feature>
<protein>
    <recommendedName>
        <fullName evidence="1">UDP-3-O-acylglucosamine N-acyltransferase</fullName>
        <ecNumber evidence="1">2.3.1.191</ecNumber>
    </recommendedName>
</protein>
<gene>
    <name evidence="1" type="primary">lpxD</name>
    <name type="ordered locus">Pnec_0517</name>
</gene>
<organism>
    <name type="scientific">Polynucleobacter necessarius subsp. necessarius (strain STIR1)</name>
    <dbReference type="NCBI Taxonomy" id="452638"/>
    <lineage>
        <taxon>Bacteria</taxon>
        <taxon>Pseudomonadati</taxon>
        <taxon>Pseudomonadota</taxon>
        <taxon>Betaproteobacteria</taxon>
        <taxon>Burkholderiales</taxon>
        <taxon>Burkholderiaceae</taxon>
        <taxon>Polynucleobacter</taxon>
    </lineage>
</organism>
<reference key="1">
    <citation type="journal article" date="2013" name="Proc. Natl. Acad. Sci. U.S.A.">
        <title>Polynucleobacter necessarius, a model for genome reduction in both free-living and symbiotic bacteria.</title>
        <authorList>
            <person name="Boscaro V."/>
            <person name="Felletti M."/>
            <person name="Vannini C."/>
            <person name="Ackerman M.S."/>
            <person name="Chain P.S."/>
            <person name="Malfatti S."/>
            <person name="Vergez L.M."/>
            <person name="Shin M."/>
            <person name="Doak T.G."/>
            <person name="Lynch M."/>
            <person name="Petroni G."/>
        </authorList>
    </citation>
    <scope>NUCLEOTIDE SEQUENCE [LARGE SCALE GENOMIC DNA]</scope>
    <source>
        <strain>STIR1</strain>
    </source>
</reference>
<sequence>MPTAIELAEQFQASLVGEAPHGFTGLAPLERAQSNQISFLSNLLYRQQASESAAGALIVSQSDLDFLQANPGANSVKRVYFVAKNPYTTFARMAQYFAKANDPIYASGIHPSAVIDSTAIVPPSCHIGPFVQIGAGVKLGERVSILGNSSIAKDSVIASDTLIYPSVSIYHNTQIGERCIIHSGAVIGADGFGFAPDFSATGGEWVKIPQTGRVVISNDVEIGASTTIDRGAMSDTVIGAGTKIDNQVQIAHNVIVGSCCVIAGCAAISGSTKIGNFCIIGGAANFAGHLTIADRTTVSGNTSIIRSITEPGQHFTGVYPSMLHGAWEKNAAILRGLDKIRQRLRLLDKNKNSGS</sequence>
<keyword id="KW-0012">Acyltransferase</keyword>
<keyword id="KW-0441">Lipid A biosynthesis</keyword>
<keyword id="KW-0444">Lipid biosynthesis</keyword>
<keyword id="KW-0443">Lipid metabolism</keyword>
<keyword id="KW-0677">Repeat</keyword>
<keyword id="KW-0808">Transferase</keyword>